<comment type="function">
    <text evidence="3">E3 ubiquitin-protein ligase involved in ubiquitin fusion degradation (UFD) pathway and regulation of DNA repair. Part of the ubiquitin fusion degradation (UFD) pathway, a process that mediates ubiquitination of protein at their N-terminus, regardless of the presence of lysine residues in target proteins. Acts as a key regulator of DNA damage response by acting as a suppressor of RNF168, an E3 ubiquitin-protein ligase that promotes accumulation of 'Lys-63'-linked histone H2A and H2AX at DNA damage sites, thereby acting as a guard against excessive spreading of ubiquitinated chromatin at damaged chromosomes. In normal cells, mediates ubiquitination and degradation of isoform p19ARF/ARF of CDKN2A, a lysine-less tumor suppressor required for p53/TP53 activation under oncogenic stress. In cancer cells, however, isoform p19ARF/ARF and TRIP12 are located in different cell compartments, preventing isoform p19ARF/ARF ubiquitination and degradation. Does not mediate ubiquitination of isoform p16-INK4a of CDKN2A. Also catalyzes ubiquitination of NAE1 and SMARCE1, leading to their degradation. Ubiquitination and degradation of target proteins is regulated by interaction with proteins such as MYC, TRADD or SMARCC1, which disrupt the interaction between TRIP12 and target proteins. Mediates ubiquitination of ASXL1: following binding to N(6)-methyladenosine methylated DNA, ASXL1 is ubiquitinated by TRIP12, leading to its degradation and subsequent inactivation of the PR-DUB complex.</text>
</comment>
<comment type="catalytic activity">
    <reaction evidence="3">
        <text>S-ubiquitinyl-[E2 ubiquitin-conjugating enzyme]-L-cysteine + [acceptor protein]-L-lysine = [E2 ubiquitin-conjugating enzyme]-L-cysteine + N(6)-ubiquitinyl-[acceptor protein]-L-lysine.</text>
        <dbReference type="EC" id="2.3.2.26"/>
    </reaction>
</comment>
<comment type="pathway">
    <text evidence="3">Protein modification; protein ubiquitination.</text>
</comment>
<comment type="subunit">
    <text evidence="3">Interacts with MYC; leading to disrupt interaction with isoform p19ARF/ARF of CDKN2A. Interacts with TRADD; leading to disrupt interaction with isoform p19ARF/ARF of CDKN2A. Interacts with SMARCC1; leading to disrupt interaction with SMARCE1.</text>
</comment>
<comment type="subcellular location">
    <subcellularLocation>
        <location evidence="3">Nucleus</location>
        <location evidence="3">Nucleoplasm</location>
    </subcellularLocation>
</comment>
<comment type="alternative products">
    <event type="alternative splicing"/>
    <isoform>
        <id>F1LP64-1</id>
        <name>1</name>
        <sequence type="displayed"/>
    </isoform>
    <isoform>
        <id>F1LP64-2</id>
        <name>2</name>
        <sequence type="described" ref="VSP_044332"/>
    </isoform>
</comment>
<comment type="similarity">
    <text evidence="8">Belongs to the UPL family. K-HECT subfamily.</text>
</comment>
<gene>
    <name type="primary">Trip12</name>
</gene>
<keyword id="KW-0007">Acetylation</keyword>
<keyword id="KW-0025">Alternative splicing</keyword>
<keyword id="KW-0227">DNA damage</keyword>
<keyword id="KW-0234">DNA repair</keyword>
<keyword id="KW-0539">Nucleus</keyword>
<keyword id="KW-0597">Phosphoprotein</keyword>
<keyword id="KW-1185">Reference proteome</keyword>
<keyword id="KW-0808">Transferase</keyword>
<keyword id="KW-0833">Ubl conjugation pathway</keyword>
<organism>
    <name type="scientific">Rattus norvegicus</name>
    <name type="common">Rat</name>
    <dbReference type="NCBI Taxonomy" id="10116"/>
    <lineage>
        <taxon>Eukaryota</taxon>
        <taxon>Metazoa</taxon>
        <taxon>Chordata</taxon>
        <taxon>Craniata</taxon>
        <taxon>Vertebrata</taxon>
        <taxon>Euteleostomi</taxon>
        <taxon>Mammalia</taxon>
        <taxon>Eutheria</taxon>
        <taxon>Euarchontoglires</taxon>
        <taxon>Glires</taxon>
        <taxon>Rodentia</taxon>
        <taxon>Myomorpha</taxon>
        <taxon>Muroidea</taxon>
        <taxon>Muridae</taxon>
        <taxon>Murinae</taxon>
        <taxon>Rattus</taxon>
    </lineage>
</organism>
<proteinExistence type="evidence at protein level"/>
<name>TRIPC_RAT</name>
<accession>F1LP64</accession>
<accession>F1LP79</accession>
<accession>Q497C1</accession>
<accession>Q5I0I0</accession>
<dbReference type="EC" id="2.3.2.26" evidence="3"/>
<dbReference type="EMBL" id="BC088304">
    <property type="protein sequence ID" value="AAH88304.1"/>
    <property type="molecule type" value="mRNA"/>
</dbReference>
<dbReference type="EMBL" id="BC100624">
    <property type="protein sequence ID" value="AAI00625.1"/>
    <property type="molecule type" value="mRNA"/>
</dbReference>
<dbReference type="RefSeq" id="NP_001026829.2">
    <molecule id="F1LP64-1"/>
    <property type="nucleotide sequence ID" value="NM_001031659.4"/>
</dbReference>
<dbReference type="RefSeq" id="XP_063123341.1">
    <molecule id="F1LP64-1"/>
    <property type="nucleotide sequence ID" value="XM_063267271.1"/>
</dbReference>
<dbReference type="RefSeq" id="XP_063123342.1">
    <molecule id="F1LP64-1"/>
    <property type="nucleotide sequence ID" value="XM_063267272.1"/>
</dbReference>
<dbReference type="SMR" id="F1LP64"/>
<dbReference type="BioGRID" id="261382">
    <property type="interactions" value="2"/>
</dbReference>
<dbReference type="FunCoup" id="F1LP64">
    <property type="interactions" value="3937"/>
</dbReference>
<dbReference type="IntAct" id="F1LP64">
    <property type="interactions" value="8"/>
</dbReference>
<dbReference type="STRING" id="10116.ENSRNOP00000068991"/>
<dbReference type="iPTMnet" id="F1LP64"/>
<dbReference type="PhosphoSitePlus" id="F1LP64"/>
<dbReference type="jPOST" id="F1LP64"/>
<dbReference type="PaxDb" id="10116-ENSRNOP00000022822"/>
<dbReference type="GeneID" id="316575"/>
<dbReference type="KEGG" id="rno:316575"/>
<dbReference type="UCSC" id="RGD:1306607">
    <property type="organism name" value="rat"/>
</dbReference>
<dbReference type="AGR" id="RGD:1306607"/>
<dbReference type="CTD" id="9320"/>
<dbReference type="RGD" id="1306607">
    <property type="gene designation" value="Trip12"/>
</dbReference>
<dbReference type="VEuPathDB" id="HostDB:ENSRNOG00000016963"/>
<dbReference type="eggNOG" id="KOG0168">
    <property type="taxonomic scope" value="Eukaryota"/>
</dbReference>
<dbReference type="eggNOG" id="KOG0170">
    <property type="taxonomic scope" value="Eukaryota"/>
</dbReference>
<dbReference type="InParanoid" id="F1LP64"/>
<dbReference type="OrthoDB" id="271273at2759"/>
<dbReference type="TreeFam" id="TF323674"/>
<dbReference type="Reactome" id="R-RNO-983168">
    <property type="pathway name" value="Antigen processing: Ubiquitination &amp; Proteasome degradation"/>
</dbReference>
<dbReference type="UniPathway" id="UPA00143"/>
<dbReference type="PRO" id="PR:F1LP64"/>
<dbReference type="Proteomes" id="UP000002494">
    <property type="component" value="Chromosome 9"/>
</dbReference>
<dbReference type="Bgee" id="ENSRNOG00000016963">
    <property type="expression patterns" value="Expressed in testis and 20 other cell types or tissues"/>
</dbReference>
<dbReference type="ExpressionAtlas" id="F1LP64">
    <property type="expression patterns" value="baseline and differential"/>
</dbReference>
<dbReference type="GO" id="GO:0016607">
    <property type="term" value="C:nuclear speck"/>
    <property type="evidence" value="ECO:0000318"/>
    <property type="project" value="GO_Central"/>
</dbReference>
<dbReference type="GO" id="GO:0005654">
    <property type="term" value="C:nucleoplasm"/>
    <property type="evidence" value="ECO:0000250"/>
    <property type="project" value="UniProtKB"/>
</dbReference>
<dbReference type="GO" id="GO:0046966">
    <property type="term" value="F:nuclear thyroid hormone receptor binding"/>
    <property type="evidence" value="ECO:0000266"/>
    <property type="project" value="RGD"/>
</dbReference>
<dbReference type="GO" id="GO:0061630">
    <property type="term" value="F:ubiquitin protein ligase activity"/>
    <property type="evidence" value="ECO:0000250"/>
    <property type="project" value="UniProtKB"/>
</dbReference>
<dbReference type="GO" id="GO:0008270">
    <property type="term" value="F:zinc ion binding"/>
    <property type="evidence" value="ECO:0007669"/>
    <property type="project" value="InterPro"/>
</dbReference>
<dbReference type="GO" id="GO:0006974">
    <property type="term" value="P:DNA damage response"/>
    <property type="evidence" value="ECO:0000318"/>
    <property type="project" value="GO_Central"/>
</dbReference>
<dbReference type="GO" id="GO:0006281">
    <property type="term" value="P:DNA repair"/>
    <property type="evidence" value="ECO:0007669"/>
    <property type="project" value="UniProtKB-KW"/>
</dbReference>
<dbReference type="GO" id="GO:0140861">
    <property type="term" value="P:DNA repair-dependent chromatin remodeling"/>
    <property type="evidence" value="ECO:0000250"/>
    <property type="project" value="UniProtKB"/>
</dbReference>
<dbReference type="GO" id="GO:0033696">
    <property type="term" value="P:heterochromatin boundary formation"/>
    <property type="evidence" value="ECO:0000250"/>
    <property type="project" value="UniProtKB"/>
</dbReference>
<dbReference type="GO" id="GO:0043161">
    <property type="term" value="P:proteasome-mediated ubiquitin-dependent protein catabolic process"/>
    <property type="evidence" value="ECO:0000318"/>
    <property type="project" value="GO_Central"/>
</dbReference>
<dbReference type="GO" id="GO:0000209">
    <property type="term" value="P:protein polyubiquitination"/>
    <property type="evidence" value="ECO:0000250"/>
    <property type="project" value="UniProtKB"/>
</dbReference>
<dbReference type="GO" id="GO:0045995">
    <property type="term" value="P:regulation of embryonic development"/>
    <property type="evidence" value="ECO:0000250"/>
    <property type="project" value="UniProtKB"/>
</dbReference>
<dbReference type="GO" id="GO:0006511">
    <property type="term" value="P:ubiquitin-dependent protein catabolic process"/>
    <property type="evidence" value="ECO:0000250"/>
    <property type="project" value="UniProtKB"/>
</dbReference>
<dbReference type="CDD" id="cd00078">
    <property type="entry name" value="HECTc"/>
    <property type="match status" value="1"/>
</dbReference>
<dbReference type="FunFam" id="3.30.2160.10:FF:000013">
    <property type="entry name" value="E3 ubiquitin-protein ligase TRIP12 isoform X1"/>
    <property type="match status" value="1"/>
</dbReference>
<dbReference type="FunFam" id="3.30.2410.10:FF:000005">
    <property type="entry name" value="E3 ubiquitin-protein ligase TRIP12 isoform X1"/>
    <property type="match status" value="1"/>
</dbReference>
<dbReference type="FunFam" id="3.30.720.50:FF:000001">
    <property type="entry name" value="E3 ubiquitin-protein ligase TRIP12 isoform X1"/>
    <property type="match status" value="1"/>
</dbReference>
<dbReference type="FunFam" id="3.90.1750.10:FF:000006">
    <property type="entry name" value="E3 ubiquitin-protein ligase TRIP12 isoform X1"/>
    <property type="match status" value="1"/>
</dbReference>
<dbReference type="FunFam" id="1.25.10.10:FF:000018">
    <property type="entry name" value="E3 ubiquitin-protein ligase TRIP12 isoform X3"/>
    <property type="match status" value="1"/>
</dbReference>
<dbReference type="Gene3D" id="3.30.720.50">
    <property type="match status" value="1"/>
</dbReference>
<dbReference type="Gene3D" id="3.30.2410.10">
    <property type="entry name" value="Hect, E3 ligase catalytic domain"/>
    <property type="match status" value="1"/>
</dbReference>
<dbReference type="Gene3D" id="3.90.1750.10">
    <property type="entry name" value="Hect, E3 ligase catalytic domains"/>
    <property type="match status" value="1"/>
</dbReference>
<dbReference type="Gene3D" id="1.25.10.10">
    <property type="entry name" value="Leucine-rich Repeat Variant"/>
    <property type="match status" value="1"/>
</dbReference>
<dbReference type="InterPro" id="IPR011989">
    <property type="entry name" value="ARM-like"/>
</dbReference>
<dbReference type="InterPro" id="IPR016024">
    <property type="entry name" value="ARM-type_fold"/>
</dbReference>
<dbReference type="InterPro" id="IPR000569">
    <property type="entry name" value="HECT_dom"/>
</dbReference>
<dbReference type="InterPro" id="IPR035983">
    <property type="entry name" value="Hect_E3_ubiquitin_ligase"/>
</dbReference>
<dbReference type="InterPro" id="IPR045322">
    <property type="entry name" value="HECTD1/TRIP12-like"/>
</dbReference>
<dbReference type="InterPro" id="IPR018123">
    <property type="entry name" value="WWE-dom_subgr"/>
</dbReference>
<dbReference type="InterPro" id="IPR004170">
    <property type="entry name" value="WWE_dom"/>
</dbReference>
<dbReference type="InterPro" id="IPR037197">
    <property type="entry name" value="WWE_dom_sf"/>
</dbReference>
<dbReference type="PANTHER" id="PTHR45670">
    <property type="entry name" value="E3 UBIQUITIN-PROTEIN LIGASE TRIP12"/>
    <property type="match status" value="1"/>
</dbReference>
<dbReference type="PANTHER" id="PTHR45670:SF13">
    <property type="entry name" value="E3 UBIQUITIN-PROTEIN LIGASE TRIP12"/>
    <property type="match status" value="1"/>
</dbReference>
<dbReference type="Pfam" id="PF00632">
    <property type="entry name" value="HECT"/>
    <property type="match status" value="1"/>
</dbReference>
<dbReference type="Pfam" id="PF02825">
    <property type="entry name" value="WWE"/>
    <property type="match status" value="1"/>
</dbReference>
<dbReference type="SMART" id="SM00119">
    <property type="entry name" value="HECTc"/>
    <property type="match status" value="1"/>
</dbReference>
<dbReference type="SMART" id="SM00678">
    <property type="entry name" value="WWE"/>
    <property type="match status" value="1"/>
</dbReference>
<dbReference type="SUPFAM" id="SSF48371">
    <property type="entry name" value="ARM repeat"/>
    <property type="match status" value="1"/>
</dbReference>
<dbReference type="SUPFAM" id="SSF56204">
    <property type="entry name" value="Hect, E3 ligase catalytic domain"/>
    <property type="match status" value="1"/>
</dbReference>
<dbReference type="SUPFAM" id="SSF117839">
    <property type="entry name" value="WWE domain"/>
    <property type="match status" value="1"/>
</dbReference>
<dbReference type="PROSITE" id="PS50237">
    <property type="entry name" value="HECT"/>
    <property type="match status" value="1"/>
</dbReference>
<dbReference type="PROSITE" id="PS50918">
    <property type="entry name" value="WWE"/>
    <property type="match status" value="1"/>
</dbReference>
<reference key="1">
    <citation type="journal article" date="2004" name="Nature">
        <title>Genome sequence of the Brown Norway rat yields insights into mammalian evolution.</title>
        <authorList>
            <person name="Gibbs R.A."/>
            <person name="Weinstock G.M."/>
            <person name="Metzker M.L."/>
            <person name="Muzny D.M."/>
            <person name="Sodergren E.J."/>
            <person name="Scherer S."/>
            <person name="Scott G."/>
            <person name="Steffen D."/>
            <person name="Worley K.C."/>
            <person name="Burch P.E."/>
            <person name="Okwuonu G."/>
            <person name="Hines S."/>
            <person name="Lewis L."/>
            <person name="Deramo C."/>
            <person name="Delgado O."/>
            <person name="Dugan-Rocha S."/>
            <person name="Miner G."/>
            <person name="Morgan M."/>
            <person name="Hawes A."/>
            <person name="Gill R."/>
            <person name="Holt R.A."/>
            <person name="Adams M.D."/>
            <person name="Amanatides P.G."/>
            <person name="Baden-Tillson H."/>
            <person name="Barnstead M."/>
            <person name="Chin S."/>
            <person name="Evans C.A."/>
            <person name="Ferriera S."/>
            <person name="Fosler C."/>
            <person name="Glodek A."/>
            <person name="Gu Z."/>
            <person name="Jennings D."/>
            <person name="Kraft C.L."/>
            <person name="Nguyen T."/>
            <person name="Pfannkoch C.M."/>
            <person name="Sitter C."/>
            <person name="Sutton G.G."/>
            <person name="Venter J.C."/>
            <person name="Woodage T."/>
            <person name="Smith D."/>
            <person name="Lee H.-M."/>
            <person name="Gustafson E."/>
            <person name="Cahill P."/>
            <person name="Kana A."/>
            <person name="Doucette-Stamm L."/>
            <person name="Weinstock K."/>
            <person name="Fechtel K."/>
            <person name="Weiss R.B."/>
            <person name="Dunn D.M."/>
            <person name="Green E.D."/>
            <person name="Blakesley R.W."/>
            <person name="Bouffard G.G."/>
            <person name="De Jong P.J."/>
            <person name="Osoegawa K."/>
            <person name="Zhu B."/>
            <person name="Marra M."/>
            <person name="Schein J."/>
            <person name="Bosdet I."/>
            <person name="Fjell C."/>
            <person name="Jones S."/>
            <person name="Krzywinski M."/>
            <person name="Mathewson C."/>
            <person name="Siddiqui A."/>
            <person name="Wye N."/>
            <person name="McPherson J."/>
            <person name="Zhao S."/>
            <person name="Fraser C.M."/>
            <person name="Shetty J."/>
            <person name="Shatsman S."/>
            <person name="Geer K."/>
            <person name="Chen Y."/>
            <person name="Abramzon S."/>
            <person name="Nierman W.C."/>
            <person name="Havlak P.H."/>
            <person name="Chen R."/>
            <person name="Durbin K.J."/>
            <person name="Egan A."/>
            <person name="Ren Y."/>
            <person name="Song X.-Z."/>
            <person name="Li B."/>
            <person name="Liu Y."/>
            <person name="Qin X."/>
            <person name="Cawley S."/>
            <person name="Cooney A.J."/>
            <person name="D'Souza L.M."/>
            <person name="Martin K."/>
            <person name="Wu J.Q."/>
            <person name="Gonzalez-Garay M.L."/>
            <person name="Jackson A.R."/>
            <person name="Kalafus K.J."/>
            <person name="McLeod M.P."/>
            <person name="Milosavljevic A."/>
            <person name="Virk D."/>
            <person name="Volkov A."/>
            <person name="Wheeler D.A."/>
            <person name="Zhang Z."/>
            <person name="Bailey J.A."/>
            <person name="Eichler E.E."/>
            <person name="Tuzun E."/>
            <person name="Birney E."/>
            <person name="Mongin E."/>
            <person name="Ureta-Vidal A."/>
            <person name="Woodwark C."/>
            <person name="Zdobnov E."/>
            <person name="Bork P."/>
            <person name="Suyama M."/>
            <person name="Torrents D."/>
            <person name="Alexandersson M."/>
            <person name="Trask B.J."/>
            <person name="Young J.M."/>
            <person name="Huang H."/>
            <person name="Wang H."/>
            <person name="Xing H."/>
            <person name="Daniels S."/>
            <person name="Gietzen D."/>
            <person name="Schmidt J."/>
            <person name="Stevens K."/>
            <person name="Vitt U."/>
            <person name="Wingrove J."/>
            <person name="Camara F."/>
            <person name="Mar Alba M."/>
            <person name="Abril J.F."/>
            <person name="Guigo R."/>
            <person name="Smit A."/>
            <person name="Dubchak I."/>
            <person name="Rubin E.M."/>
            <person name="Couronne O."/>
            <person name="Poliakov A."/>
            <person name="Huebner N."/>
            <person name="Ganten D."/>
            <person name="Goesele C."/>
            <person name="Hummel O."/>
            <person name="Kreitler T."/>
            <person name="Lee Y.-A."/>
            <person name="Monti J."/>
            <person name="Schulz H."/>
            <person name="Zimdahl H."/>
            <person name="Himmelbauer H."/>
            <person name="Lehrach H."/>
            <person name="Jacob H.J."/>
            <person name="Bromberg S."/>
            <person name="Gullings-Handley J."/>
            <person name="Jensen-Seaman M.I."/>
            <person name="Kwitek A.E."/>
            <person name="Lazar J."/>
            <person name="Pasko D."/>
            <person name="Tonellato P.J."/>
            <person name="Twigger S."/>
            <person name="Ponting C.P."/>
            <person name="Duarte J.M."/>
            <person name="Rice S."/>
            <person name="Goodstadt L."/>
            <person name="Beatson S.A."/>
            <person name="Emes R.D."/>
            <person name="Winter E.E."/>
            <person name="Webber C."/>
            <person name="Brandt P."/>
            <person name="Nyakatura G."/>
            <person name="Adetobi M."/>
            <person name="Chiaromonte F."/>
            <person name="Elnitski L."/>
            <person name="Eswara P."/>
            <person name="Hardison R.C."/>
            <person name="Hou M."/>
            <person name="Kolbe D."/>
            <person name="Makova K."/>
            <person name="Miller W."/>
            <person name="Nekrutenko A."/>
            <person name="Riemer C."/>
            <person name="Schwartz S."/>
            <person name="Taylor J."/>
            <person name="Yang S."/>
            <person name="Zhang Y."/>
            <person name="Lindpaintner K."/>
            <person name="Andrews T.D."/>
            <person name="Caccamo M."/>
            <person name="Clamp M."/>
            <person name="Clarke L."/>
            <person name="Curwen V."/>
            <person name="Durbin R.M."/>
            <person name="Eyras E."/>
            <person name="Searle S.M."/>
            <person name="Cooper G.M."/>
            <person name="Batzoglou S."/>
            <person name="Brudno M."/>
            <person name="Sidow A."/>
            <person name="Stone E.A."/>
            <person name="Payseur B.A."/>
            <person name="Bourque G."/>
            <person name="Lopez-Otin C."/>
            <person name="Puente X.S."/>
            <person name="Chakrabarti K."/>
            <person name="Chatterji S."/>
            <person name="Dewey C."/>
            <person name="Pachter L."/>
            <person name="Bray N."/>
            <person name="Yap V.B."/>
            <person name="Caspi A."/>
            <person name="Tesler G."/>
            <person name="Pevzner P.A."/>
            <person name="Haussler D."/>
            <person name="Roskin K.M."/>
            <person name="Baertsch R."/>
            <person name="Clawson H."/>
            <person name="Furey T.S."/>
            <person name="Hinrichs A.S."/>
            <person name="Karolchik D."/>
            <person name="Kent W.J."/>
            <person name="Rosenbloom K.R."/>
            <person name="Trumbower H."/>
            <person name="Weirauch M."/>
            <person name="Cooper D.N."/>
            <person name="Stenson P.D."/>
            <person name="Ma B."/>
            <person name="Brent M."/>
            <person name="Arumugam M."/>
            <person name="Shteynberg D."/>
            <person name="Copley R.R."/>
            <person name="Taylor M.S."/>
            <person name="Riethman H."/>
            <person name="Mudunuri U."/>
            <person name="Peterson J."/>
            <person name="Guyer M."/>
            <person name="Felsenfeld A."/>
            <person name="Old S."/>
            <person name="Mockrin S."/>
            <person name="Collins F.S."/>
        </authorList>
    </citation>
    <scope>NUCLEOTIDE SEQUENCE [LARGE SCALE GENOMIC DNA]</scope>
    <source>
        <strain>Brown Norway</strain>
    </source>
</reference>
<reference key="2">
    <citation type="journal article" date="2004" name="Genome Res.">
        <title>The status, quality, and expansion of the NIH full-length cDNA project: the Mammalian Gene Collection (MGC).</title>
        <authorList>
            <consortium name="The MGC Project Team"/>
        </authorList>
    </citation>
    <scope>NUCLEOTIDE SEQUENCE [LARGE SCALE MRNA] (ISOFORM 2)</scope>
    <source>
        <tissue>Liver</tissue>
        <tissue>Prostate</tissue>
    </source>
</reference>
<reference key="3">
    <citation type="journal article" date="2012" name="Nat. Commun.">
        <title>Quantitative maps of protein phosphorylation sites across 14 different rat organs and tissues.</title>
        <authorList>
            <person name="Lundby A."/>
            <person name="Secher A."/>
            <person name="Lage K."/>
            <person name="Nordsborg N.B."/>
            <person name="Dmytriyev A."/>
            <person name="Lundby C."/>
            <person name="Olsen J.V."/>
        </authorList>
    </citation>
    <scope>PHOSPHORYLATION [LARGE SCALE ANALYSIS] AT SER-77; SER-312; SER-1024; SER-1049; SER-1350; SER-1355; SER-1409 AND THR-1410</scope>
    <scope>IDENTIFICATION BY MASS SPECTROMETRY [LARGE SCALE ANALYSIS]</scope>
</reference>
<evidence type="ECO:0000250" key="1"/>
<evidence type="ECO:0000250" key="2">
    <source>
        <dbReference type="UniProtKB" id="G5E870"/>
    </source>
</evidence>
<evidence type="ECO:0000250" key="3">
    <source>
        <dbReference type="UniProtKB" id="Q14669"/>
    </source>
</evidence>
<evidence type="ECO:0000255" key="4">
    <source>
        <dbReference type="PROSITE-ProRule" id="PRU00104"/>
    </source>
</evidence>
<evidence type="ECO:0000255" key="5">
    <source>
        <dbReference type="PROSITE-ProRule" id="PRU00248"/>
    </source>
</evidence>
<evidence type="ECO:0000256" key="6">
    <source>
        <dbReference type="SAM" id="MobiDB-lite"/>
    </source>
</evidence>
<evidence type="ECO:0000303" key="7">
    <source>
    </source>
</evidence>
<evidence type="ECO:0000305" key="8"/>
<evidence type="ECO:0007744" key="9">
    <source>
    </source>
</evidence>
<protein>
    <recommendedName>
        <fullName>E3 ubiquitin-protein ligase TRIP12</fullName>
        <ecNumber evidence="3">2.3.2.26</ecNumber>
    </recommendedName>
    <alternativeName>
        <fullName>HECT-type E3 ubiquitin transferase TRIP12</fullName>
    </alternativeName>
    <alternativeName>
        <fullName>Thyroid receptor-interacting protein 12</fullName>
        <shortName>TR-interacting protein 12</shortName>
        <shortName>TRIP-12</shortName>
    </alternativeName>
</protein>
<feature type="initiator methionine" description="Removed" evidence="3">
    <location>
        <position position="1"/>
    </location>
</feature>
<feature type="chain" id="PRO_0000419690" description="E3 ubiquitin-protein ligase TRIP12">
    <location>
        <begin position="2"/>
        <end position="2025"/>
    </location>
</feature>
<feature type="domain" description="WWE" evidence="5">
    <location>
        <begin position="755"/>
        <end position="869"/>
    </location>
</feature>
<feature type="domain" description="HECT" evidence="4">
    <location>
        <begin position="1918"/>
        <end position="2025"/>
    </location>
</feature>
<feature type="region of interest" description="Disordered" evidence="6">
    <location>
        <begin position="1"/>
        <end position="404"/>
    </location>
</feature>
<feature type="region of interest" description="Disordered" evidence="6">
    <location>
        <begin position="970"/>
        <end position="1077"/>
    </location>
</feature>
<feature type="region of interest" description="Disordered" evidence="6">
    <location>
        <begin position="1440"/>
        <end position="1466"/>
    </location>
</feature>
<feature type="region of interest" description="K-box" evidence="1">
    <location>
        <begin position="1529"/>
        <end position="1603"/>
    </location>
</feature>
<feature type="region of interest" description="Disordered" evidence="6">
    <location>
        <begin position="1601"/>
        <end position="1620"/>
    </location>
</feature>
<feature type="compositionally biased region" description="Polar residues" evidence="6">
    <location>
        <begin position="1"/>
        <end position="10"/>
    </location>
</feature>
<feature type="compositionally biased region" description="Polar residues" evidence="6">
    <location>
        <begin position="18"/>
        <end position="27"/>
    </location>
</feature>
<feature type="compositionally biased region" description="Basic and acidic residues" evidence="6">
    <location>
        <begin position="48"/>
        <end position="70"/>
    </location>
</feature>
<feature type="compositionally biased region" description="Polar residues" evidence="6">
    <location>
        <begin position="78"/>
        <end position="88"/>
    </location>
</feature>
<feature type="compositionally biased region" description="Polar residues" evidence="6">
    <location>
        <begin position="99"/>
        <end position="108"/>
    </location>
</feature>
<feature type="compositionally biased region" description="Polar residues" evidence="6">
    <location>
        <begin position="119"/>
        <end position="132"/>
    </location>
</feature>
<feature type="compositionally biased region" description="Low complexity" evidence="6">
    <location>
        <begin position="154"/>
        <end position="166"/>
    </location>
</feature>
<feature type="compositionally biased region" description="Low complexity" evidence="6">
    <location>
        <begin position="175"/>
        <end position="216"/>
    </location>
</feature>
<feature type="compositionally biased region" description="Polar residues" evidence="6">
    <location>
        <begin position="280"/>
        <end position="290"/>
    </location>
</feature>
<feature type="compositionally biased region" description="Polar residues" evidence="6">
    <location>
        <begin position="326"/>
        <end position="338"/>
    </location>
</feature>
<feature type="compositionally biased region" description="Basic and acidic residues" evidence="6">
    <location>
        <begin position="346"/>
        <end position="358"/>
    </location>
</feature>
<feature type="compositionally biased region" description="Polar residues" evidence="6">
    <location>
        <begin position="362"/>
        <end position="371"/>
    </location>
</feature>
<feature type="compositionally biased region" description="Low complexity" evidence="6">
    <location>
        <begin position="379"/>
        <end position="397"/>
    </location>
</feature>
<feature type="compositionally biased region" description="Low complexity" evidence="6">
    <location>
        <begin position="983"/>
        <end position="1006"/>
    </location>
</feature>
<feature type="compositionally biased region" description="Basic residues" evidence="6">
    <location>
        <begin position="1034"/>
        <end position="1047"/>
    </location>
</feature>
<feature type="compositionally biased region" description="Basic and acidic residues" evidence="6">
    <location>
        <begin position="1050"/>
        <end position="1059"/>
    </location>
</feature>
<feature type="compositionally biased region" description="Low complexity" evidence="6">
    <location>
        <begin position="1062"/>
        <end position="1073"/>
    </location>
</feature>
<feature type="active site" description="Glycyl thioester intermediate" evidence="4">
    <location>
        <position position="1992"/>
    </location>
</feature>
<feature type="modified residue" description="N-acetylserine" evidence="3">
    <location>
        <position position="2"/>
    </location>
</feature>
<feature type="modified residue" description="Phosphoserine" evidence="3">
    <location>
        <position position="12"/>
    </location>
</feature>
<feature type="modified residue" description="Phosphoserine" evidence="9">
    <location>
        <position position="77"/>
    </location>
</feature>
<feature type="modified residue" description="Phosphoserine" evidence="2">
    <location>
        <position position="85"/>
    </location>
</feature>
<feature type="modified residue" description="Phosphoserine" evidence="3">
    <location>
        <position position="100"/>
    </location>
</feature>
<feature type="modified residue" description="N6-acetyllysine" evidence="2">
    <location>
        <position position="181"/>
    </location>
</feature>
<feature type="modified residue" description="Phosphoserine" evidence="3">
    <location>
        <position position="310"/>
    </location>
</feature>
<feature type="modified residue" description="Phosphoserine" evidence="9">
    <location>
        <position position="312"/>
    </location>
</feature>
<feature type="modified residue" description="Phosphoserine" evidence="3">
    <location>
        <position position="975"/>
    </location>
</feature>
<feature type="modified residue" description="Phosphoserine" evidence="9">
    <location>
        <position position="1024"/>
    </location>
</feature>
<feature type="modified residue" description="Phosphoserine" evidence="3">
    <location>
        <position position="1030"/>
    </location>
</feature>
<feature type="modified residue" description="Phosphoserine" evidence="9">
    <location>
        <position position="1049"/>
    </location>
</feature>
<feature type="modified residue" description="Phosphoserine" evidence="3">
    <location>
        <position position="1063"/>
    </location>
</feature>
<feature type="modified residue" description="Phosphoserine" evidence="9">
    <location>
        <position position="1350"/>
    </location>
</feature>
<feature type="modified residue" description="Phosphoserine" evidence="9">
    <location>
        <position position="1355"/>
    </location>
</feature>
<feature type="modified residue" description="Phosphoserine" evidence="2">
    <location>
        <position position="1362"/>
    </location>
</feature>
<feature type="modified residue" description="Phosphoserine" evidence="9">
    <location>
        <position position="1409"/>
    </location>
</feature>
<feature type="modified residue" description="Phosphothreonine" evidence="9">
    <location>
        <position position="1410"/>
    </location>
</feature>
<feature type="modified residue" description="N6-acetyllysine" evidence="2">
    <location>
        <position position="1458"/>
    </location>
</feature>
<feature type="modified residue" description="Phosphoserine" evidence="2">
    <location>
        <position position="1460"/>
    </location>
</feature>
<feature type="splice variant" id="VSP_044332" description="In isoform 2." evidence="7">
    <location>
        <begin position="1374"/>
        <end position="1422"/>
    </location>
</feature>
<sequence length="2025" mass="223928">MSNRPNNNPGGSLRRSQRNTAGAQPQDDSIGGRSCSSSSAVIVPQPEDPDRANTSERQKTGQVPKKDNSRGVKRSASPDYNRTNSPSSAKKPRAFQHIESLSETNKPPSKSKKRHLDQEQQLKSAQLPSTSKAHTRKSVAAGSSRSQKRKRTESSCVKSGSGSESTGAEERSAKPTKLASKSATSAKAGCSTITDSSSAASTSSSSSAVASASSTVPAGARVKQGKDQNKARRSRSASSPSPRRSSREKEQSKTGGSSKFDWAARFSPKVSLPKTKLSLPGSSKSETSKPGPSGLQAKLASLRKSTKKRSESPPAELPSLRRSTRQKTTGSCASTSRRGSGLGKRGAAEARRQEKMADPEGNQETVNSSAARTDEAPQGAAASSSVAGAVGMTTSGESESDDSEMGRLQALLEARGLPPHLFGPLGPRMSQLFHRTIGSGASSKAQQLLQGLQASDESQQLQAVIEMCQLLVMGNEETLGGFPVKSVVPALITLLQMEHNFDIMNHACRALTYMMEALPRSSAVVVDAIPVFLEKLQVIQCIDVAEQALTALEMLSRRHSKAILQAGGLADCLLYLEFFSINAQRNALAIAANCCQSITPDEFHFVADSLPLLTQRLTHQDKKSVESTCLCFARLVDNFQHEENLLQQVASKDLLTNVQQLLVVTPPILSSGMFIMVVRMFSLMCSNCPTLAVQLMKQNIAETLHFLLCGASNGSCQEQIDLVPRSPQELYELTSLICELMPCLPKEGIFAVDTMLKKGNAQNTDGAIWQWRDDRGLWHPYNRIDSRIIEAAHQVGEDEISLSTLGRVYTIDFNSMQQINEDTGTARAIQRKPNPLANTNTSGYSDLKKDDARAQLMKEDPELAKSFIKTLFGVLYEVYSSSAGPAVRHKCLRAILRIIYFADAELLKDVLKNHAVSSHIASMLSSQDLKIVVGALQMAEILMQKLPDIFSVYFRREGVMHQVKHLAESESLLTSPPKACTNGSGSLGSTTPASSGTATAATNASADLGSPSLQHSRDDSLDLSPQGRLSDVLKRKRLPKRGPRRPKYSPPRDDDKVDNQAKSPTTTQSPKSSFLASLNPKTWGRLSAQSNSNNIEPARTAGVSGLARAASKDTISNNREKIKGWIKEQAHKFVERYFSSENMDGSNPALNVLQRLCAATEQLNLQVDGGAECLVEIRSIVSESDVSSFEIQHSGFVKQLLLYLTSKSEKDAVSREIRLKRFLHVFFSSPLPGEEPVGRVEPVGHAPLLALVHKMNNCLSQMEQFPVKVHDFPSGNGSGGSFSLNRGSQALKFFNTHQLKCQLQRHPDCANVKQWKGGPVKIDPLALVQAIERYLVVRGYGRVREDDEDSDDDGSDEEIDESLAAQFLNSGNVRHRLQFYIGEHLLPYNMTVYQAVRQFSVQAEDERESTDDESNPLGRAGIWTKTHTIWYKPVREDEESSKDCVGGKRGRAQTAPTKTSPRNAKKHDELWHDGVCPSVANPLEVYLIPTPPENITFEDPSLDVILLLRVLHAISRYWYYLYDNAMCKEIIPTSEFINSKLTAKANRQLQDPLVIMTGNIPTWLTELGKTCPFFFPFDTRQMLFYVTAFDRDRAMQRLLDTNPEINQSDSQDSRVAPRLDRKKRTVNREELLKQAESVMQDLGSSRAMLEIQYENEVGTGLGPTLEFYALVSQELQRADLGLWRGEEVTLSNPKGSQEGTKYIQNLQGLFALPFGRTAKPAHIAKVKMKFRFLGKLMAKAIMDFRLVDLPLGLPFYKWMLRQETSLTSHDLFDIDPVVARSVYHLEDIVRQKKRLEQDKSQTKESLQYALETLTMNGCSVEDLGLDFTLPGFPNIELKKGGKDIPVTIHNLEEYLRLVIFWALNEGVCRQFDSFRDGFESVFPLSHLQYFYPEELDQLLCGSKADTWDAKTLMECCRPDHGYTHDSRAVKFLFEILSSFDNEQQRLFLQFVTGSPRLPVGGFRSLNPPLTIVRKTFESTENPDDFLPSVMTCVNYLKLPDYSSIEIMRDKLLIAAREGQQSFHLS</sequence>